<gene>
    <name evidence="1" type="primary">tyrS</name>
    <name type="ordered locus">CE1540</name>
</gene>
<name>SYY_COREF</name>
<comment type="function">
    <text evidence="1">Catalyzes the attachment of tyrosine to tRNA(Tyr) in a two-step reaction: tyrosine is first activated by ATP to form Tyr-AMP and then transferred to the acceptor end of tRNA(Tyr).</text>
</comment>
<comment type="catalytic activity">
    <reaction evidence="1">
        <text>tRNA(Tyr) + L-tyrosine + ATP = L-tyrosyl-tRNA(Tyr) + AMP + diphosphate + H(+)</text>
        <dbReference type="Rhea" id="RHEA:10220"/>
        <dbReference type="Rhea" id="RHEA-COMP:9706"/>
        <dbReference type="Rhea" id="RHEA-COMP:9707"/>
        <dbReference type="ChEBI" id="CHEBI:15378"/>
        <dbReference type="ChEBI" id="CHEBI:30616"/>
        <dbReference type="ChEBI" id="CHEBI:33019"/>
        <dbReference type="ChEBI" id="CHEBI:58315"/>
        <dbReference type="ChEBI" id="CHEBI:78442"/>
        <dbReference type="ChEBI" id="CHEBI:78536"/>
        <dbReference type="ChEBI" id="CHEBI:456215"/>
        <dbReference type="EC" id="6.1.1.1"/>
    </reaction>
</comment>
<comment type="subunit">
    <text evidence="1">Homodimer.</text>
</comment>
<comment type="subcellular location">
    <subcellularLocation>
        <location evidence="1">Cytoplasm</location>
    </subcellularLocation>
</comment>
<comment type="similarity">
    <text evidence="1">Belongs to the class-I aminoacyl-tRNA synthetase family. TyrS type 1 subfamily.</text>
</comment>
<accession>Q8FTM1</accession>
<organism>
    <name type="scientific">Corynebacterium efficiens (strain DSM 44549 / YS-314 / AJ 12310 / JCM 11189 / NBRC 100395)</name>
    <dbReference type="NCBI Taxonomy" id="196164"/>
    <lineage>
        <taxon>Bacteria</taxon>
        <taxon>Bacillati</taxon>
        <taxon>Actinomycetota</taxon>
        <taxon>Actinomycetes</taxon>
        <taxon>Mycobacteriales</taxon>
        <taxon>Corynebacteriaceae</taxon>
        <taxon>Corynebacterium</taxon>
    </lineage>
</organism>
<evidence type="ECO:0000255" key="1">
    <source>
        <dbReference type="HAMAP-Rule" id="MF_02006"/>
    </source>
</evidence>
<feature type="chain" id="PRO_0000234701" description="Tyrosine--tRNA ligase">
    <location>
        <begin position="1"/>
        <end position="421"/>
    </location>
</feature>
<feature type="domain" description="S4 RNA-binding" evidence="1">
    <location>
        <begin position="354"/>
        <end position="420"/>
    </location>
</feature>
<feature type="short sequence motif" description="'HIGH' region">
    <location>
        <begin position="40"/>
        <end position="49"/>
    </location>
</feature>
<feature type="short sequence motif" description="'KMSKS' region">
    <location>
        <begin position="229"/>
        <end position="233"/>
    </location>
</feature>
<feature type="binding site" evidence="1">
    <location>
        <position position="35"/>
    </location>
    <ligand>
        <name>L-tyrosine</name>
        <dbReference type="ChEBI" id="CHEBI:58315"/>
    </ligand>
</feature>
<feature type="binding site" evidence="1">
    <location>
        <position position="169"/>
    </location>
    <ligand>
        <name>L-tyrosine</name>
        <dbReference type="ChEBI" id="CHEBI:58315"/>
    </ligand>
</feature>
<feature type="binding site" evidence="1">
    <location>
        <position position="173"/>
    </location>
    <ligand>
        <name>L-tyrosine</name>
        <dbReference type="ChEBI" id="CHEBI:58315"/>
    </ligand>
</feature>
<feature type="binding site" evidence="1">
    <location>
        <position position="232"/>
    </location>
    <ligand>
        <name>ATP</name>
        <dbReference type="ChEBI" id="CHEBI:30616"/>
    </ligand>
</feature>
<proteinExistence type="inferred from homology"/>
<protein>
    <recommendedName>
        <fullName evidence="1">Tyrosine--tRNA ligase</fullName>
        <ecNumber evidence="1">6.1.1.1</ecNumber>
    </recommendedName>
    <alternativeName>
        <fullName evidence="1">Tyrosyl-tRNA synthetase</fullName>
        <shortName evidence="1">TyrRS</shortName>
    </alternativeName>
</protein>
<keyword id="KW-0030">Aminoacyl-tRNA synthetase</keyword>
<keyword id="KW-0067">ATP-binding</keyword>
<keyword id="KW-0963">Cytoplasm</keyword>
<keyword id="KW-0436">Ligase</keyword>
<keyword id="KW-0547">Nucleotide-binding</keyword>
<keyword id="KW-0648">Protein biosynthesis</keyword>
<keyword id="KW-1185">Reference proteome</keyword>
<keyword id="KW-0694">RNA-binding</keyword>
<dbReference type="EC" id="6.1.1.1" evidence="1"/>
<dbReference type="EMBL" id="BA000035">
    <property type="protein sequence ID" value="BAC18350.1"/>
    <property type="molecule type" value="Genomic_DNA"/>
</dbReference>
<dbReference type="RefSeq" id="WP_006770450.1">
    <property type="nucleotide sequence ID" value="NC_004369.1"/>
</dbReference>
<dbReference type="SMR" id="Q8FTM1"/>
<dbReference type="STRING" id="196164.gene:10741955"/>
<dbReference type="KEGG" id="cef:CE1540"/>
<dbReference type="eggNOG" id="COG0162">
    <property type="taxonomic scope" value="Bacteria"/>
</dbReference>
<dbReference type="HOGENOM" id="CLU_024003_0_2_11"/>
<dbReference type="OrthoDB" id="9804243at2"/>
<dbReference type="Proteomes" id="UP000001409">
    <property type="component" value="Chromosome"/>
</dbReference>
<dbReference type="GO" id="GO:0005829">
    <property type="term" value="C:cytosol"/>
    <property type="evidence" value="ECO:0007669"/>
    <property type="project" value="TreeGrafter"/>
</dbReference>
<dbReference type="GO" id="GO:0005524">
    <property type="term" value="F:ATP binding"/>
    <property type="evidence" value="ECO:0007669"/>
    <property type="project" value="UniProtKB-UniRule"/>
</dbReference>
<dbReference type="GO" id="GO:0003723">
    <property type="term" value="F:RNA binding"/>
    <property type="evidence" value="ECO:0007669"/>
    <property type="project" value="UniProtKB-KW"/>
</dbReference>
<dbReference type="GO" id="GO:0004831">
    <property type="term" value="F:tyrosine-tRNA ligase activity"/>
    <property type="evidence" value="ECO:0007669"/>
    <property type="project" value="UniProtKB-UniRule"/>
</dbReference>
<dbReference type="GO" id="GO:0006437">
    <property type="term" value="P:tyrosyl-tRNA aminoacylation"/>
    <property type="evidence" value="ECO:0007669"/>
    <property type="project" value="UniProtKB-UniRule"/>
</dbReference>
<dbReference type="CDD" id="cd00165">
    <property type="entry name" value="S4"/>
    <property type="match status" value="1"/>
</dbReference>
<dbReference type="CDD" id="cd00805">
    <property type="entry name" value="TyrRS_core"/>
    <property type="match status" value="1"/>
</dbReference>
<dbReference type="FunFam" id="1.10.240.10:FF:000001">
    <property type="entry name" value="Tyrosine--tRNA ligase"/>
    <property type="match status" value="1"/>
</dbReference>
<dbReference type="FunFam" id="3.10.290.10:FF:000014">
    <property type="entry name" value="Tyrosine--tRNA ligase"/>
    <property type="match status" value="1"/>
</dbReference>
<dbReference type="FunFam" id="3.40.50.620:FF:000008">
    <property type="entry name" value="Tyrosine--tRNA ligase"/>
    <property type="match status" value="1"/>
</dbReference>
<dbReference type="Gene3D" id="3.40.50.620">
    <property type="entry name" value="HUPs"/>
    <property type="match status" value="1"/>
</dbReference>
<dbReference type="Gene3D" id="3.10.290.10">
    <property type="entry name" value="RNA-binding S4 domain"/>
    <property type="match status" value="1"/>
</dbReference>
<dbReference type="Gene3D" id="1.10.240.10">
    <property type="entry name" value="Tyrosyl-Transfer RNA Synthetase"/>
    <property type="match status" value="1"/>
</dbReference>
<dbReference type="HAMAP" id="MF_02006">
    <property type="entry name" value="Tyr_tRNA_synth_type1"/>
    <property type="match status" value="1"/>
</dbReference>
<dbReference type="InterPro" id="IPR001412">
    <property type="entry name" value="aa-tRNA-synth_I_CS"/>
</dbReference>
<dbReference type="InterPro" id="IPR002305">
    <property type="entry name" value="aa-tRNA-synth_Ic"/>
</dbReference>
<dbReference type="InterPro" id="IPR014729">
    <property type="entry name" value="Rossmann-like_a/b/a_fold"/>
</dbReference>
<dbReference type="InterPro" id="IPR002942">
    <property type="entry name" value="S4_RNA-bd"/>
</dbReference>
<dbReference type="InterPro" id="IPR036986">
    <property type="entry name" value="S4_RNA-bd_sf"/>
</dbReference>
<dbReference type="InterPro" id="IPR054608">
    <property type="entry name" value="SYY-like_C"/>
</dbReference>
<dbReference type="InterPro" id="IPR002307">
    <property type="entry name" value="Tyr-tRNA-ligase"/>
</dbReference>
<dbReference type="InterPro" id="IPR024088">
    <property type="entry name" value="Tyr-tRNA-ligase_bac-type"/>
</dbReference>
<dbReference type="InterPro" id="IPR024107">
    <property type="entry name" value="Tyr-tRNA-ligase_bac_1"/>
</dbReference>
<dbReference type="NCBIfam" id="TIGR00234">
    <property type="entry name" value="tyrS"/>
    <property type="match status" value="1"/>
</dbReference>
<dbReference type="PANTHER" id="PTHR11766:SF0">
    <property type="entry name" value="TYROSINE--TRNA LIGASE, MITOCHONDRIAL"/>
    <property type="match status" value="1"/>
</dbReference>
<dbReference type="PANTHER" id="PTHR11766">
    <property type="entry name" value="TYROSYL-TRNA SYNTHETASE"/>
    <property type="match status" value="1"/>
</dbReference>
<dbReference type="Pfam" id="PF22421">
    <property type="entry name" value="SYY_C-terminal"/>
    <property type="match status" value="1"/>
</dbReference>
<dbReference type="Pfam" id="PF00579">
    <property type="entry name" value="tRNA-synt_1b"/>
    <property type="match status" value="1"/>
</dbReference>
<dbReference type="PRINTS" id="PR01040">
    <property type="entry name" value="TRNASYNTHTYR"/>
</dbReference>
<dbReference type="SMART" id="SM00363">
    <property type="entry name" value="S4"/>
    <property type="match status" value="1"/>
</dbReference>
<dbReference type="SUPFAM" id="SSF55174">
    <property type="entry name" value="Alpha-L RNA-binding motif"/>
    <property type="match status" value="1"/>
</dbReference>
<dbReference type="SUPFAM" id="SSF52374">
    <property type="entry name" value="Nucleotidylyl transferase"/>
    <property type="match status" value="1"/>
</dbReference>
<dbReference type="PROSITE" id="PS00178">
    <property type="entry name" value="AA_TRNA_LIGASE_I"/>
    <property type="match status" value="1"/>
</dbReference>
<dbReference type="PROSITE" id="PS50889">
    <property type="entry name" value="S4"/>
    <property type="match status" value="1"/>
</dbReference>
<reference key="1">
    <citation type="journal article" date="2003" name="Genome Res.">
        <title>Comparative complete genome sequence analysis of the amino acid replacements responsible for the thermostability of Corynebacterium efficiens.</title>
        <authorList>
            <person name="Nishio Y."/>
            <person name="Nakamura Y."/>
            <person name="Kawarabayasi Y."/>
            <person name="Usuda Y."/>
            <person name="Kimura E."/>
            <person name="Sugimoto S."/>
            <person name="Matsui K."/>
            <person name="Yamagishi A."/>
            <person name="Kikuchi H."/>
            <person name="Ikeo K."/>
            <person name="Gojobori T."/>
        </authorList>
    </citation>
    <scope>NUCLEOTIDE SEQUENCE [LARGE SCALE GENOMIC DNA]</scope>
    <source>
        <strain>DSM 44549 / YS-314 / AJ 12310 / JCM 11189 / NBRC 100395</strain>
    </source>
</reference>
<sequence length="421" mass="47016">MTTNIIDELSWRGLINQSTDLDALREATQEPITLYCGFDPTGPSLHAGHLVPLLMLRRFQQAGHNPIVLAGGATGMIGDPRDVGERTMNSADTVAEWAERISDQLSRFVDFEGEHAARLVNNAEWTNNMSVVTFLRDVGKHFPLNTMLARDTVKRRLETDGISYTEFSYMLLQANDFVELNRRFNCILQVGGGDQWGNIVSGVDLNRRVQGKSVHGITVPLVTDSEGKKFGKSTGGGSLWLDPEMTSPYSWYQYFINAADADVIRYLRWFTFLTKEELDELEVEVAERPFKREAQRRLAREMTNLVHGEEATAAVELAAQALFGRAELRDLDEKTLEASVSETEVAEIQPGEPRTIVDLLIASGLVDSRGAARRTISEGGAYVNNERITADDWEPSESDLLHGQWLVLRKGKKNFAGVKIK</sequence>